<reference key="1">
    <citation type="submission" date="2008-04" db="EMBL/GenBank/DDBJ databases">
        <title>Complete sequence of Clostridium botulinum strain Eklund.</title>
        <authorList>
            <person name="Brinkac L.M."/>
            <person name="Brown J.L."/>
            <person name="Bruce D."/>
            <person name="Detter C."/>
            <person name="Munk C."/>
            <person name="Smith L.A."/>
            <person name="Smith T.J."/>
            <person name="Sutton G."/>
            <person name="Brettin T.S."/>
        </authorList>
    </citation>
    <scope>NUCLEOTIDE SEQUENCE [LARGE SCALE GENOMIC DNA]</scope>
    <source>
        <strain>Eklund 17B / Type B</strain>
    </source>
</reference>
<gene>
    <name evidence="1" type="primary">katG</name>
    <name type="ordered locus">CLL_A1367</name>
</gene>
<name>KATG_CLOBB</name>
<keyword id="KW-0349">Heme</keyword>
<keyword id="KW-0376">Hydrogen peroxide</keyword>
<keyword id="KW-0408">Iron</keyword>
<keyword id="KW-0479">Metal-binding</keyword>
<keyword id="KW-0560">Oxidoreductase</keyword>
<keyword id="KW-0575">Peroxidase</keyword>
<feature type="chain" id="PRO_0000354764" description="Catalase-peroxidase">
    <location>
        <begin position="1"/>
        <end position="730"/>
    </location>
</feature>
<feature type="active site" description="Proton acceptor" evidence="1">
    <location>
        <position position="96"/>
    </location>
</feature>
<feature type="binding site" description="axial binding residue" evidence="1">
    <location>
        <position position="259"/>
    </location>
    <ligand>
        <name>heme b</name>
        <dbReference type="ChEBI" id="CHEBI:60344"/>
    </ligand>
    <ligandPart>
        <name>Fe</name>
        <dbReference type="ChEBI" id="CHEBI:18248"/>
    </ligandPart>
</feature>
<feature type="site" description="Transition state stabilizer" evidence="1">
    <location>
        <position position="92"/>
    </location>
</feature>
<feature type="cross-link" description="Tryptophyl-tyrosyl-methioninium (Trp-Tyr) (with M-244)" evidence="1">
    <location>
        <begin position="95"/>
        <end position="218"/>
    </location>
</feature>
<feature type="cross-link" description="Tryptophyl-tyrosyl-methioninium (Tyr-Met) (with W-95)" evidence="1">
    <location>
        <begin position="218"/>
        <end position="244"/>
    </location>
</feature>
<sequence>MTENKCPVTGKMGKATAGSGTTNKDWWPNQLNLNILHQNSQLSNPMSKDFNYAEEFKKLDFQALKVDLYMLMTDSQIWWPADYGNYGPLFIRMAWHSAGTYRVGDGRGGGSLGLQRFAPLNSWPDNINLDKARRLLWPIKKKYGNKISWADLLILTGNCALESMGLKTLGFGGGRVDVWEPQEDIYWGSEKEWLGDEREKGDKELENPLAAVQMGLIYVNPEGPNGNPDPLGSAHDVRETFARMAMNDEETVALIAGGHTFGKCHGAASPSYVGPAPEAAPIEEQGLGWKNTYGSGNGDDTIGSGLEGAWKANPTKWTMGYLKTLFKYDWELVKSPAGAYQWLAKNVDEEDMVIDAEDSTKKHRPMMTTADLGLRYDPIYEPIARNYLKNPEKFAHDFASAWFKLTHRDMGPISRYLGPEVPKESFIWQDPIPLVKHKLITKKDITHIKKKILDSGLSISDLVATAWASASTFRGSDKRGGANGGRIRLEPQKNWEVNEPKKLNNVLNTLKQIKENFNSSHSKDKKVSLADIIILGGCVGIEQAAKRAGYNINVPFIPGRTDAIQEQTDVKSFAVLEPKEDGFRNYLKTKYVVKPEDMLIDRAQLLTLTAPEMTVLIGGMRVLNCNYNKSKDGVFTNRPECLTNDFFVNLLDMNTVWKPKSEDKDRFEGFDRETGELKWTATRVDLIFGSNSQLRAIAEVYACDDNKEKFIQDFIFAWNKIMNADRFEIK</sequence>
<proteinExistence type="inferred from homology"/>
<protein>
    <recommendedName>
        <fullName evidence="1">Catalase-peroxidase</fullName>
        <shortName evidence="1">CP</shortName>
        <ecNumber evidence="1">1.11.1.21</ecNumber>
    </recommendedName>
    <alternativeName>
        <fullName evidence="1">Peroxidase/catalase</fullName>
    </alternativeName>
</protein>
<evidence type="ECO:0000255" key="1">
    <source>
        <dbReference type="HAMAP-Rule" id="MF_01961"/>
    </source>
</evidence>
<dbReference type="EC" id="1.11.1.21" evidence="1"/>
<dbReference type="EMBL" id="CP001056">
    <property type="protein sequence ID" value="ACD21810.1"/>
    <property type="molecule type" value="Genomic_DNA"/>
</dbReference>
<dbReference type="SMR" id="B2TJE9"/>
<dbReference type="PeroxiBase" id="6254">
    <property type="entry name" value="CboCP01"/>
</dbReference>
<dbReference type="KEGG" id="cbk:CLL_A1367"/>
<dbReference type="PATRIC" id="fig|935198.13.peg.1314"/>
<dbReference type="HOGENOM" id="CLU_025424_2_0_9"/>
<dbReference type="Proteomes" id="UP000001195">
    <property type="component" value="Chromosome"/>
</dbReference>
<dbReference type="GO" id="GO:0005829">
    <property type="term" value="C:cytosol"/>
    <property type="evidence" value="ECO:0007669"/>
    <property type="project" value="TreeGrafter"/>
</dbReference>
<dbReference type="GO" id="GO:0004096">
    <property type="term" value="F:catalase activity"/>
    <property type="evidence" value="ECO:0007669"/>
    <property type="project" value="UniProtKB-UniRule"/>
</dbReference>
<dbReference type="GO" id="GO:0020037">
    <property type="term" value="F:heme binding"/>
    <property type="evidence" value="ECO:0007669"/>
    <property type="project" value="InterPro"/>
</dbReference>
<dbReference type="GO" id="GO:0046872">
    <property type="term" value="F:metal ion binding"/>
    <property type="evidence" value="ECO:0007669"/>
    <property type="project" value="UniProtKB-KW"/>
</dbReference>
<dbReference type="GO" id="GO:0070301">
    <property type="term" value="P:cellular response to hydrogen peroxide"/>
    <property type="evidence" value="ECO:0007669"/>
    <property type="project" value="TreeGrafter"/>
</dbReference>
<dbReference type="GO" id="GO:0042744">
    <property type="term" value="P:hydrogen peroxide catabolic process"/>
    <property type="evidence" value="ECO:0007669"/>
    <property type="project" value="UniProtKB-KW"/>
</dbReference>
<dbReference type="CDD" id="cd00649">
    <property type="entry name" value="catalase_peroxidase_1"/>
    <property type="match status" value="1"/>
</dbReference>
<dbReference type="CDD" id="cd08200">
    <property type="entry name" value="catalase_peroxidase_2"/>
    <property type="match status" value="1"/>
</dbReference>
<dbReference type="FunFam" id="1.10.420.10:FF:000002">
    <property type="entry name" value="Catalase-peroxidase"/>
    <property type="match status" value="1"/>
</dbReference>
<dbReference type="FunFam" id="1.10.420.10:FF:000004">
    <property type="entry name" value="Catalase-peroxidase"/>
    <property type="match status" value="1"/>
</dbReference>
<dbReference type="FunFam" id="1.10.520.10:FF:000002">
    <property type="entry name" value="Catalase-peroxidase"/>
    <property type="match status" value="1"/>
</dbReference>
<dbReference type="Gene3D" id="1.10.520.10">
    <property type="match status" value="2"/>
</dbReference>
<dbReference type="Gene3D" id="1.10.420.10">
    <property type="entry name" value="Peroxidase, domain 2"/>
    <property type="match status" value="2"/>
</dbReference>
<dbReference type="HAMAP" id="MF_01961">
    <property type="entry name" value="Catal_peroxid"/>
    <property type="match status" value="1"/>
</dbReference>
<dbReference type="InterPro" id="IPR000763">
    <property type="entry name" value="Catalase_peroxidase"/>
</dbReference>
<dbReference type="InterPro" id="IPR002016">
    <property type="entry name" value="Haem_peroxidase"/>
</dbReference>
<dbReference type="InterPro" id="IPR010255">
    <property type="entry name" value="Haem_peroxidase_sf"/>
</dbReference>
<dbReference type="InterPro" id="IPR019794">
    <property type="entry name" value="Peroxidases_AS"/>
</dbReference>
<dbReference type="InterPro" id="IPR019793">
    <property type="entry name" value="Peroxidases_heam-ligand_BS"/>
</dbReference>
<dbReference type="NCBIfam" id="TIGR00198">
    <property type="entry name" value="cat_per_HPI"/>
    <property type="match status" value="1"/>
</dbReference>
<dbReference type="NCBIfam" id="NF011635">
    <property type="entry name" value="PRK15061.1"/>
    <property type="match status" value="1"/>
</dbReference>
<dbReference type="PANTHER" id="PTHR30555:SF0">
    <property type="entry name" value="CATALASE-PEROXIDASE"/>
    <property type="match status" value="1"/>
</dbReference>
<dbReference type="PANTHER" id="PTHR30555">
    <property type="entry name" value="HYDROPEROXIDASE I, BIFUNCTIONAL CATALASE-PEROXIDASE"/>
    <property type="match status" value="1"/>
</dbReference>
<dbReference type="Pfam" id="PF00141">
    <property type="entry name" value="peroxidase"/>
    <property type="match status" value="2"/>
</dbReference>
<dbReference type="PRINTS" id="PR00460">
    <property type="entry name" value="BPEROXIDASE"/>
</dbReference>
<dbReference type="PRINTS" id="PR00458">
    <property type="entry name" value="PEROXIDASE"/>
</dbReference>
<dbReference type="SUPFAM" id="SSF48113">
    <property type="entry name" value="Heme-dependent peroxidases"/>
    <property type="match status" value="2"/>
</dbReference>
<dbReference type="PROSITE" id="PS00435">
    <property type="entry name" value="PEROXIDASE_1"/>
    <property type="match status" value="1"/>
</dbReference>
<dbReference type="PROSITE" id="PS00436">
    <property type="entry name" value="PEROXIDASE_2"/>
    <property type="match status" value="1"/>
</dbReference>
<dbReference type="PROSITE" id="PS50873">
    <property type="entry name" value="PEROXIDASE_4"/>
    <property type="match status" value="1"/>
</dbReference>
<organism>
    <name type="scientific">Clostridium botulinum (strain Eklund 17B / Type B)</name>
    <dbReference type="NCBI Taxonomy" id="935198"/>
    <lineage>
        <taxon>Bacteria</taxon>
        <taxon>Bacillati</taxon>
        <taxon>Bacillota</taxon>
        <taxon>Clostridia</taxon>
        <taxon>Eubacteriales</taxon>
        <taxon>Clostridiaceae</taxon>
        <taxon>Clostridium</taxon>
    </lineage>
</organism>
<comment type="function">
    <text evidence="1">Bifunctional enzyme with both catalase and broad-spectrum peroxidase activity.</text>
</comment>
<comment type="catalytic activity">
    <reaction evidence="1">
        <text>H2O2 + AH2 = A + 2 H2O</text>
        <dbReference type="Rhea" id="RHEA:30275"/>
        <dbReference type="ChEBI" id="CHEBI:13193"/>
        <dbReference type="ChEBI" id="CHEBI:15377"/>
        <dbReference type="ChEBI" id="CHEBI:16240"/>
        <dbReference type="ChEBI" id="CHEBI:17499"/>
        <dbReference type="EC" id="1.11.1.21"/>
    </reaction>
</comment>
<comment type="catalytic activity">
    <reaction evidence="1">
        <text>2 H2O2 = O2 + 2 H2O</text>
        <dbReference type="Rhea" id="RHEA:20309"/>
        <dbReference type="ChEBI" id="CHEBI:15377"/>
        <dbReference type="ChEBI" id="CHEBI:15379"/>
        <dbReference type="ChEBI" id="CHEBI:16240"/>
        <dbReference type="EC" id="1.11.1.21"/>
    </reaction>
</comment>
<comment type="cofactor">
    <cofactor evidence="1">
        <name>heme b</name>
        <dbReference type="ChEBI" id="CHEBI:60344"/>
    </cofactor>
    <text evidence="1">Binds 1 heme b (iron(II)-protoporphyrin IX) group per dimer.</text>
</comment>
<comment type="subunit">
    <text evidence="1">Homodimer or homotetramer.</text>
</comment>
<comment type="PTM">
    <text evidence="1">Formation of the three residue Trp-Tyr-Met cross-link is important for the catalase, but not the peroxidase activity of the enzyme.</text>
</comment>
<comment type="similarity">
    <text evidence="1">Belongs to the peroxidase family. Peroxidase/catalase subfamily.</text>
</comment>
<accession>B2TJE9</accession>